<dbReference type="EMBL" id="X76200">
    <property type="protein sequence ID" value="CAA53793.1"/>
    <property type="molecule type" value="mRNA"/>
</dbReference>
<dbReference type="EMBL" id="L14270">
    <property type="protein sequence ID" value="AAA28923.1"/>
    <property type="molecule type" value="Genomic_DNA"/>
</dbReference>
<dbReference type="EMBL" id="L14270">
    <property type="protein sequence ID" value="AAA28924.1"/>
    <property type="molecule type" value="Genomic_DNA"/>
</dbReference>
<dbReference type="EMBL" id="AE013599">
    <property type="protein sequence ID" value="AAF58820.1"/>
    <property type="molecule type" value="Genomic_DNA"/>
</dbReference>
<dbReference type="EMBL" id="AE013599">
    <property type="protein sequence ID" value="AAM68777.1"/>
    <property type="molecule type" value="Genomic_DNA"/>
</dbReference>
<dbReference type="EMBL" id="AE013599">
    <property type="protein sequence ID" value="ACL83087.1"/>
    <property type="molecule type" value="Genomic_DNA"/>
</dbReference>
<dbReference type="EMBL" id="AE013599">
    <property type="protein sequence ID" value="ACL83088.1"/>
    <property type="molecule type" value="Genomic_DNA"/>
</dbReference>
<dbReference type="EMBL" id="BT003769">
    <property type="protein sequence ID" value="AAO41448.1"/>
    <property type="molecule type" value="mRNA"/>
</dbReference>
<dbReference type="EMBL" id="BT009942">
    <property type="protein sequence ID" value="AAQ22411.1"/>
    <property type="molecule type" value="mRNA"/>
</dbReference>
<dbReference type="PIR" id="JC1521">
    <property type="entry name" value="JC1521"/>
</dbReference>
<dbReference type="PIR" id="JC1522">
    <property type="entry name" value="JC1522"/>
</dbReference>
<dbReference type="RefSeq" id="NP_001137633.1">
    <molecule id="P18489-1"/>
    <property type="nucleotide sequence ID" value="NM_001144161.2"/>
</dbReference>
<dbReference type="RefSeq" id="NP_001137634.1">
    <molecule id="P18489-4"/>
    <property type="nucleotide sequence ID" value="NM_001144162.2"/>
</dbReference>
<dbReference type="RefSeq" id="NP_001286278.1">
    <molecule id="P18489-3"/>
    <property type="nucleotide sequence ID" value="NM_001299349.1"/>
</dbReference>
<dbReference type="RefSeq" id="NP_523680.1">
    <molecule id="P18489-3"/>
    <property type="nucleotide sequence ID" value="NM_078956.4"/>
</dbReference>
<dbReference type="RefSeq" id="NP_724906.1">
    <molecule id="P18489-2"/>
    <property type="nucleotide sequence ID" value="NM_165756.3"/>
</dbReference>
<dbReference type="SMR" id="P18489"/>
<dbReference type="BioGRID" id="61901">
    <property type="interactions" value="64"/>
</dbReference>
<dbReference type="FunCoup" id="P18489">
    <property type="interactions" value="441"/>
</dbReference>
<dbReference type="IntAct" id="P18489">
    <property type="interactions" value="83"/>
</dbReference>
<dbReference type="STRING" id="7227.FBpp0271782"/>
<dbReference type="PaxDb" id="7227-FBpp0271782"/>
<dbReference type="DNASU" id="36080"/>
<dbReference type="EnsemblMetazoa" id="FBtr0088362">
    <molecule id="P18489-3"/>
    <property type="protein sequence ID" value="FBpp0087450"/>
    <property type="gene ID" value="FBgn0003660"/>
</dbReference>
<dbReference type="EnsemblMetazoa" id="FBtr0088363">
    <molecule id="P18489-2"/>
    <property type="protein sequence ID" value="FBpp0087451"/>
    <property type="gene ID" value="FBgn0003660"/>
</dbReference>
<dbReference type="EnsemblMetazoa" id="FBtr0273274">
    <molecule id="P18489-1"/>
    <property type="protein sequence ID" value="FBpp0271782"/>
    <property type="gene ID" value="FBgn0003660"/>
</dbReference>
<dbReference type="EnsemblMetazoa" id="FBtr0273275">
    <molecule id="P18489-4"/>
    <property type="protein sequence ID" value="FBpp0271783"/>
    <property type="gene ID" value="FBgn0003660"/>
</dbReference>
<dbReference type="EnsemblMetazoa" id="FBtr0339455">
    <molecule id="P18489-3"/>
    <property type="protein sequence ID" value="FBpp0308541"/>
    <property type="gene ID" value="FBgn0003660"/>
</dbReference>
<dbReference type="GeneID" id="36080"/>
<dbReference type="KEGG" id="dme:Dmel_CG12210"/>
<dbReference type="AGR" id="FB:FBgn0003660"/>
<dbReference type="CTD" id="36080"/>
<dbReference type="FlyBase" id="FBgn0003660">
    <property type="gene designation" value="Syb"/>
</dbReference>
<dbReference type="VEuPathDB" id="VectorBase:FBgn0003660"/>
<dbReference type="eggNOG" id="KOG0860">
    <property type="taxonomic scope" value="Eukaryota"/>
</dbReference>
<dbReference type="GeneTree" id="ENSGT00940000170580"/>
<dbReference type="InParanoid" id="P18489"/>
<dbReference type="OMA" id="TEQFHRS"/>
<dbReference type="OrthoDB" id="10042941at2759"/>
<dbReference type="PhylomeDB" id="P18489"/>
<dbReference type="Reactome" id="R-DME-181429">
    <property type="pathway name" value="Serotonin Neurotransmitter Release Cycle"/>
</dbReference>
<dbReference type="Reactome" id="R-DME-181430">
    <property type="pathway name" value="Norepinephrine Neurotransmitter Release Cycle"/>
</dbReference>
<dbReference type="Reactome" id="R-DME-199992">
    <property type="pathway name" value="trans-Golgi Network Vesicle Budding"/>
</dbReference>
<dbReference type="Reactome" id="R-DME-210500">
    <property type="pathway name" value="Glutamate Neurotransmitter Release Cycle"/>
</dbReference>
<dbReference type="Reactome" id="R-DME-212676">
    <property type="pathway name" value="Dopamine Neurotransmitter Release Cycle"/>
</dbReference>
<dbReference type="Reactome" id="R-DME-264642">
    <property type="pathway name" value="Acetylcholine Neurotransmitter Release Cycle"/>
</dbReference>
<dbReference type="Reactome" id="R-DME-432720">
    <property type="pathway name" value="Lysosome Vesicle Biogenesis"/>
</dbReference>
<dbReference type="Reactome" id="R-DME-432722">
    <property type="pathway name" value="Golgi Associated Vesicle Biogenesis"/>
</dbReference>
<dbReference type="Reactome" id="R-DME-449836">
    <property type="pathway name" value="Other interleukin signaling"/>
</dbReference>
<dbReference type="Reactome" id="R-DME-6798695">
    <property type="pathway name" value="Neutrophil degranulation"/>
</dbReference>
<dbReference type="Reactome" id="R-DME-8856825">
    <property type="pathway name" value="Cargo recognition for clathrin-mediated endocytosis"/>
</dbReference>
<dbReference type="Reactome" id="R-DME-8856828">
    <property type="pathway name" value="Clathrin-mediated endocytosis"/>
</dbReference>
<dbReference type="Reactome" id="R-DME-888590">
    <property type="pathway name" value="GABA synthesis, release, reuptake and degradation"/>
</dbReference>
<dbReference type="Reactome" id="R-DME-9609523">
    <property type="pathway name" value="Insertion of tail-anchored proteins into the endoplasmic reticulum membrane"/>
</dbReference>
<dbReference type="SignaLink" id="P18489"/>
<dbReference type="BioGRID-ORCS" id="36080">
    <property type="hits" value="0 hits in 3 CRISPR screens"/>
</dbReference>
<dbReference type="GenomeRNAi" id="36080"/>
<dbReference type="PRO" id="PR:P18489"/>
<dbReference type="Proteomes" id="UP000000803">
    <property type="component" value="Chromosome 2R"/>
</dbReference>
<dbReference type="Bgee" id="FBgn0003660">
    <property type="expression patterns" value="Expressed in adult anterior midgut class I enteroendocrine cell in adult midgut (Drosophila) and 194 other cell types or tissues"/>
</dbReference>
<dbReference type="ExpressionAtlas" id="P18489">
    <property type="expression patterns" value="baseline and differential"/>
</dbReference>
<dbReference type="GO" id="GO:0005886">
    <property type="term" value="C:plasma membrane"/>
    <property type="evidence" value="ECO:0000318"/>
    <property type="project" value="GO_Central"/>
</dbReference>
<dbReference type="GO" id="GO:0031201">
    <property type="term" value="C:SNARE complex"/>
    <property type="evidence" value="ECO:0000318"/>
    <property type="project" value="GO_Central"/>
</dbReference>
<dbReference type="GO" id="GO:0008021">
    <property type="term" value="C:synaptic vesicle"/>
    <property type="evidence" value="ECO:0000250"/>
    <property type="project" value="FlyBase"/>
</dbReference>
<dbReference type="GO" id="GO:0030672">
    <property type="term" value="C:synaptic vesicle membrane"/>
    <property type="evidence" value="ECO:0007669"/>
    <property type="project" value="UniProtKB-SubCell"/>
</dbReference>
<dbReference type="GO" id="GO:0005484">
    <property type="term" value="F:SNAP receptor activity"/>
    <property type="evidence" value="ECO:0000250"/>
    <property type="project" value="FlyBase"/>
</dbReference>
<dbReference type="GO" id="GO:0000149">
    <property type="term" value="F:SNARE binding"/>
    <property type="evidence" value="ECO:0000314"/>
    <property type="project" value="UniProtKB"/>
</dbReference>
<dbReference type="GO" id="GO:0019905">
    <property type="term" value="F:syntaxin binding"/>
    <property type="evidence" value="ECO:0000318"/>
    <property type="project" value="GO_Central"/>
</dbReference>
<dbReference type="GO" id="GO:0007269">
    <property type="term" value="P:neurotransmitter secretion"/>
    <property type="evidence" value="ECO:0000303"/>
    <property type="project" value="FlyBase"/>
</dbReference>
<dbReference type="GO" id="GO:0031340">
    <property type="term" value="P:positive regulation of vesicle fusion"/>
    <property type="evidence" value="ECO:0000314"/>
    <property type="project" value="UniProtKB"/>
</dbReference>
<dbReference type="GO" id="GO:0016081">
    <property type="term" value="P:synaptic vesicle docking"/>
    <property type="evidence" value="ECO:0000250"/>
    <property type="project" value="FlyBase"/>
</dbReference>
<dbReference type="GO" id="GO:0006906">
    <property type="term" value="P:vesicle fusion"/>
    <property type="evidence" value="ECO:0000314"/>
    <property type="project" value="UniProtKB"/>
</dbReference>
<dbReference type="GO" id="GO:0016192">
    <property type="term" value="P:vesicle-mediated transport"/>
    <property type="evidence" value="ECO:0000250"/>
    <property type="project" value="FlyBase"/>
</dbReference>
<dbReference type="CDD" id="cd15870">
    <property type="entry name" value="R-SNARE_VAMP2"/>
    <property type="match status" value="1"/>
</dbReference>
<dbReference type="FunFam" id="1.20.5.110:FF:000145">
    <property type="entry name" value="synaptobrevin isoform X1"/>
    <property type="match status" value="1"/>
</dbReference>
<dbReference type="Gene3D" id="1.20.5.110">
    <property type="match status" value="1"/>
</dbReference>
<dbReference type="InterPro" id="IPR001388">
    <property type="entry name" value="Synaptobrevin-like"/>
</dbReference>
<dbReference type="InterPro" id="IPR016444">
    <property type="entry name" value="Synaptobrevin/VAMP"/>
</dbReference>
<dbReference type="InterPro" id="IPR042855">
    <property type="entry name" value="V_SNARE_CC"/>
</dbReference>
<dbReference type="PANTHER" id="PTHR45701">
    <property type="entry name" value="SYNAPTOBREVIN FAMILY MEMBER"/>
    <property type="match status" value="1"/>
</dbReference>
<dbReference type="Pfam" id="PF00957">
    <property type="entry name" value="Synaptobrevin"/>
    <property type="match status" value="1"/>
</dbReference>
<dbReference type="PRINTS" id="PR00219">
    <property type="entry name" value="SYNAPTOBREVN"/>
</dbReference>
<dbReference type="SUPFAM" id="SSF58038">
    <property type="entry name" value="SNARE fusion complex"/>
    <property type="match status" value="1"/>
</dbReference>
<dbReference type="PROSITE" id="PS00417">
    <property type="entry name" value="SYNAPTOBREVIN"/>
    <property type="match status" value="1"/>
</dbReference>
<dbReference type="PROSITE" id="PS50892">
    <property type="entry name" value="V_SNARE"/>
    <property type="match status" value="1"/>
</dbReference>
<proteinExistence type="evidence at protein level"/>
<evidence type="ECO:0000250" key="1">
    <source>
        <dbReference type="UniProtKB" id="P63027"/>
    </source>
</evidence>
<evidence type="ECO:0000250" key="2">
    <source>
        <dbReference type="UniProtKB" id="Q9W0C1"/>
    </source>
</evidence>
<evidence type="ECO:0000255" key="3"/>
<evidence type="ECO:0000255" key="4">
    <source>
        <dbReference type="PROSITE-ProRule" id="PRU00290"/>
    </source>
</evidence>
<evidence type="ECO:0000256" key="5">
    <source>
        <dbReference type="SAM" id="MobiDB-lite"/>
    </source>
</evidence>
<evidence type="ECO:0000269" key="6">
    <source>
    </source>
</evidence>
<evidence type="ECO:0000269" key="7">
    <source>
    </source>
</evidence>
<evidence type="ECO:0000269" key="8">
    <source>
    </source>
</evidence>
<evidence type="ECO:0000269" key="9">
    <source>
    </source>
</evidence>
<evidence type="ECO:0000269" key="10">
    <source>
    </source>
</evidence>
<evidence type="ECO:0000269" key="11">
    <source>
    </source>
</evidence>
<evidence type="ECO:0000303" key="12">
    <source>
    </source>
</evidence>
<evidence type="ECO:0000303" key="13">
    <source ref="5"/>
</evidence>
<evidence type="ECO:0000305" key="14"/>
<evidence type="ECO:0000312" key="15">
    <source>
        <dbReference type="FlyBase" id="FBgn0003660"/>
    </source>
</evidence>
<feature type="chain" id="PRO_0000206741" description="Synaptobrevin">
    <location>
        <begin position="1"/>
        <end position="152"/>
    </location>
</feature>
<feature type="topological domain" description="Cytoplasmic" evidence="3">
    <location>
        <begin position="1"/>
        <end position="110"/>
    </location>
</feature>
<feature type="transmembrane region" description="Helical; Anchor for type IV membrane protein" evidence="3">
    <location>
        <begin position="111"/>
        <end position="130"/>
    </location>
</feature>
<feature type="topological domain" description="Vesicular" evidence="3">
    <location>
        <begin position="131"/>
        <end position="152"/>
    </location>
</feature>
<feature type="domain" description="v-SNARE coiled-coil homology" evidence="4">
    <location>
        <begin position="47"/>
        <end position="107"/>
    </location>
</feature>
<feature type="region of interest" description="Disordered" evidence="5">
    <location>
        <begin position="1"/>
        <end position="30"/>
    </location>
</feature>
<feature type="region of interest" description="Disordered" evidence="5">
    <location>
        <begin position="133"/>
        <end position="152"/>
    </location>
</feature>
<feature type="compositionally biased region" description="Polar residues" evidence="5">
    <location>
        <begin position="1"/>
        <end position="16"/>
    </location>
</feature>
<feature type="splice variant" id="VSP_016074" description="In isoform A and isoform D." evidence="13">
    <original>DFPILPPPPNANDNYNQFGDHQIR</original>
    <variation>E</variation>
    <location>
        <begin position="16"/>
        <end position="39"/>
    </location>
</feature>
<feature type="splice variant" id="VSP_006327" description="In isoform D and isoform Syb-B." evidence="13">
    <original>VWP</original>
    <variation>LFN</variation>
    <location>
        <begin position="130"/>
        <end position="132"/>
    </location>
</feature>
<feature type="splice variant" id="VSP_006328" description="In isoform D and isoform Syb-B." evidence="13">
    <location>
        <begin position="133"/>
        <end position="152"/>
    </location>
</feature>
<feature type="sequence conflict" description="In Ref. 2; AAA28924/AAA28923." evidence="14" ref="2">
    <original>F</original>
    <variation>S</variation>
    <location>
        <position position="93"/>
    </location>
</feature>
<protein>
    <recommendedName>
        <fullName evidence="12">Synaptobrevin</fullName>
    </recommendedName>
</protein>
<sequence length="152" mass="16712">MENNEAPSPSGSNNNDFPILPPPPNANDNYNQFGDHQIRNNNAAQKKLQQTQAKVDEVVGIMRVNVEKVLERDQKLSELGERADQLEQGASQFEQQAGKLKRKQWWANMKMMIILGVIAVVLLIIVLVSVWPSSSDSGSGGGNKAITQAPPH</sequence>
<name>SYB_DROME</name>
<keyword id="KW-0025">Alternative splicing</keyword>
<keyword id="KW-1003">Cell membrane</keyword>
<keyword id="KW-0175">Coiled coil</keyword>
<keyword id="KW-0968">Cytoplasmic vesicle</keyword>
<keyword id="KW-0472">Membrane</keyword>
<keyword id="KW-1185">Reference proteome</keyword>
<keyword id="KW-0770">Synapse</keyword>
<keyword id="KW-0812">Transmembrane</keyword>
<keyword id="KW-1133">Transmembrane helix</keyword>
<keyword id="KW-0832">Ubl conjugation</keyword>
<gene>
    <name evidence="12 15" type="primary">Syb</name>
    <name evidence="15" type="ORF">CG12210</name>
</gene>
<reference key="1">
    <citation type="journal article" date="1989" name="Neuron">
        <title>A synaptic vesicle membrane protein is conserved from mammals to Drosophila.</title>
        <authorList>
            <person name="Suedhof T.C."/>
            <person name="Baumert M."/>
            <person name="Perin M.S."/>
            <person name="Jahn R."/>
        </authorList>
    </citation>
    <scope>NUCLEOTIDE SEQUENCE [MRNA] (ISOFORM SYB-A)</scope>
</reference>
<reference key="2">
    <citation type="journal article" date="1993" name="Gene">
        <title>Differential expression of transcripts from syb, a Drosophila melanogaster gene encoding VAMP (synaptobrevin) that is abundant in non-neuronal cells.</title>
        <authorList>
            <person name="Chin A.C."/>
            <person name="Burgess R.W."/>
            <person name="Wong B.R."/>
            <person name="Schwarz T.L."/>
            <person name="Scheller R.H."/>
        </authorList>
    </citation>
    <scope>NUCLEOTIDE SEQUENCE [GENOMIC DNA]</scope>
    <scope>ALTERNATIVE SPLICING (ISOFORMS SYB-A AND SYB-B)</scope>
    <scope>TISSUE SPECIFICITY</scope>
</reference>
<reference key="3">
    <citation type="journal article" date="2000" name="Science">
        <title>The genome sequence of Drosophila melanogaster.</title>
        <authorList>
            <person name="Adams M.D."/>
            <person name="Celniker S.E."/>
            <person name="Holt R.A."/>
            <person name="Evans C.A."/>
            <person name="Gocayne J.D."/>
            <person name="Amanatides P.G."/>
            <person name="Scherer S.E."/>
            <person name="Li P.W."/>
            <person name="Hoskins R.A."/>
            <person name="Galle R.F."/>
            <person name="George R.A."/>
            <person name="Lewis S.E."/>
            <person name="Richards S."/>
            <person name="Ashburner M."/>
            <person name="Henderson S.N."/>
            <person name="Sutton G.G."/>
            <person name="Wortman J.R."/>
            <person name="Yandell M.D."/>
            <person name="Zhang Q."/>
            <person name="Chen L.X."/>
            <person name="Brandon R.C."/>
            <person name="Rogers Y.-H.C."/>
            <person name="Blazej R.G."/>
            <person name="Champe M."/>
            <person name="Pfeiffer B.D."/>
            <person name="Wan K.H."/>
            <person name="Doyle C."/>
            <person name="Baxter E.G."/>
            <person name="Helt G."/>
            <person name="Nelson C.R."/>
            <person name="Miklos G.L.G."/>
            <person name="Abril J.F."/>
            <person name="Agbayani A."/>
            <person name="An H.-J."/>
            <person name="Andrews-Pfannkoch C."/>
            <person name="Baldwin D."/>
            <person name="Ballew R.M."/>
            <person name="Basu A."/>
            <person name="Baxendale J."/>
            <person name="Bayraktaroglu L."/>
            <person name="Beasley E.M."/>
            <person name="Beeson K.Y."/>
            <person name="Benos P.V."/>
            <person name="Berman B.P."/>
            <person name="Bhandari D."/>
            <person name="Bolshakov S."/>
            <person name="Borkova D."/>
            <person name="Botchan M.R."/>
            <person name="Bouck J."/>
            <person name="Brokstein P."/>
            <person name="Brottier P."/>
            <person name="Burtis K.C."/>
            <person name="Busam D.A."/>
            <person name="Butler H."/>
            <person name="Cadieu E."/>
            <person name="Center A."/>
            <person name="Chandra I."/>
            <person name="Cherry J.M."/>
            <person name="Cawley S."/>
            <person name="Dahlke C."/>
            <person name="Davenport L.B."/>
            <person name="Davies P."/>
            <person name="de Pablos B."/>
            <person name="Delcher A."/>
            <person name="Deng Z."/>
            <person name="Mays A.D."/>
            <person name="Dew I."/>
            <person name="Dietz S.M."/>
            <person name="Dodson K."/>
            <person name="Doup L.E."/>
            <person name="Downes M."/>
            <person name="Dugan-Rocha S."/>
            <person name="Dunkov B.C."/>
            <person name="Dunn P."/>
            <person name="Durbin K.J."/>
            <person name="Evangelista C.C."/>
            <person name="Ferraz C."/>
            <person name="Ferriera S."/>
            <person name="Fleischmann W."/>
            <person name="Fosler C."/>
            <person name="Gabrielian A.E."/>
            <person name="Garg N.S."/>
            <person name="Gelbart W.M."/>
            <person name="Glasser K."/>
            <person name="Glodek A."/>
            <person name="Gong F."/>
            <person name="Gorrell J.H."/>
            <person name="Gu Z."/>
            <person name="Guan P."/>
            <person name="Harris M."/>
            <person name="Harris N.L."/>
            <person name="Harvey D.A."/>
            <person name="Heiman T.J."/>
            <person name="Hernandez J.R."/>
            <person name="Houck J."/>
            <person name="Hostin D."/>
            <person name="Houston K.A."/>
            <person name="Howland T.J."/>
            <person name="Wei M.-H."/>
            <person name="Ibegwam C."/>
            <person name="Jalali M."/>
            <person name="Kalush F."/>
            <person name="Karpen G.H."/>
            <person name="Ke Z."/>
            <person name="Kennison J.A."/>
            <person name="Ketchum K.A."/>
            <person name="Kimmel B.E."/>
            <person name="Kodira C.D."/>
            <person name="Kraft C.L."/>
            <person name="Kravitz S."/>
            <person name="Kulp D."/>
            <person name="Lai Z."/>
            <person name="Lasko P."/>
            <person name="Lei Y."/>
            <person name="Levitsky A.A."/>
            <person name="Li J.H."/>
            <person name="Li Z."/>
            <person name="Liang Y."/>
            <person name="Lin X."/>
            <person name="Liu X."/>
            <person name="Mattei B."/>
            <person name="McIntosh T.C."/>
            <person name="McLeod M.P."/>
            <person name="McPherson D."/>
            <person name="Merkulov G."/>
            <person name="Milshina N.V."/>
            <person name="Mobarry C."/>
            <person name="Morris J."/>
            <person name="Moshrefi A."/>
            <person name="Mount S.M."/>
            <person name="Moy M."/>
            <person name="Murphy B."/>
            <person name="Murphy L."/>
            <person name="Muzny D.M."/>
            <person name="Nelson D.L."/>
            <person name="Nelson D.R."/>
            <person name="Nelson K.A."/>
            <person name="Nixon K."/>
            <person name="Nusskern D.R."/>
            <person name="Pacleb J.M."/>
            <person name="Palazzolo M."/>
            <person name="Pittman G.S."/>
            <person name="Pan S."/>
            <person name="Pollard J."/>
            <person name="Puri V."/>
            <person name="Reese M.G."/>
            <person name="Reinert K."/>
            <person name="Remington K."/>
            <person name="Saunders R.D.C."/>
            <person name="Scheeler F."/>
            <person name="Shen H."/>
            <person name="Shue B.C."/>
            <person name="Siden-Kiamos I."/>
            <person name="Simpson M."/>
            <person name="Skupski M.P."/>
            <person name="Smith T.J."/>
            <person name="Spier E."/>
            <person name="Spradling A.C."/>
            <person name="Stapleton M."/>
            <person name="Strong R."/>
            <person name="Sun E."/>
            <person name="Svirskas R."/>
            <person name="Tector C."/>
            <person name="Turner R."/>
            <person name="Venter E."/>
            <person name="Wang A.H."/>
            <person name="Wang X."/>
            <person name="Wang Z.-Y."/>
            <person name="Wassarman D.A."/>
            <person name="Weinstock G.M."/>
            <person name="Weissenbach J."/>
            <person name="Williams S.M."/>
            <person name="Woodage T."/>
            <person name="Worley K.C."/>
            <person name="Wu D."/>
            <person name="Yang S."/>
            <person name="Yao Q.A."/>
            <person name="Ye J."/>
            <person name="Yeh R.-F."/>
            <person name="Zaveri J.S."/>
            <person name="Zhan M."/>
            <person name="Zhang G."/>
            <person name="Zhao Q."/>
            <person name="Zheng L."/>
            <person name="Zheng X.H."/>
            <person name="Zhong F.N."/>
            <person name="Zhong W."/>
            <person name="Zhou X."/>
            <person name="Zhu S.C."/>
            <person name="Zhu X."/>
            <person name="Smith H.O."/>
            <person name="Gibbs R.A."/>
            <person name="Myers E.W."/>
            <person name="Rubin G.M."/>
            <person name="Venter J.C."/>
        </authorList>
    </citation>
    <scope>NUCLEOTIDE SEQUENCE [LARGE SCALE GENOMIC DNA]</scope>
    <source>
        <strain>Berkeley</strain>
    </source>
</reference>
<reference key="4">
    <citation type="journal article" date="2002" name="Genome Biol.">
        <title>Annotation of the Drosophila melanogaster euchromatic genome: a systematic review.</title>
        <authorList>
            <person name="Misra S."/>
            <person name="Crosby M.A."/>
            <person name="Mungall C.J."/>
            <person name="Matthews B.B."/>
            <person name="Campbell K.S."/>
            <person name="Hradecky P."/>
            <person name="Huang Y."/>
            <person name="Kaminker J.S."/>
            <person name="Millburn G.H."/>
            <person name="Prochnik S.E."/>
            <person name="Smith C.D."/>
            <person name="Tupy J.L."/>
            <person name="Whitfield E.J."/>
            <person name="Bayraktaroglu L."/>
            <person name="Berman B.P."/>
            <person name="Bettencourt B.R."/>
            <person name="Celniker S.E."/>
            <person name="de Grey A.D.N.J."/>
            <person name="Drysdale R.A."/>
            <person name="Harris N.L."/>
            <person name="Richter J."/>
            <person name="Russo S."/>
            <person name="Schroeder A.J."/>
            <person name="Shu S.Q."/>
            <person name="Stapleton M."/>
            <person name="Yamada C."/>
            <person name="Ashburner M."/>
            <person name="Gelbart W.M."/>
            <person name="Rubin G.M."/>
            <person name="Lewis S.E."/>
        </authorList>
    </citation>
    <scope>GENOME REANNOTATION</scope>
    <scope>ALTERNATIVE SPLICING</scope>
    <source>
        <strain>Berkeley</strain>
    </source>
</reference>
<reference key="5">
    <citation type="submission" date="2003-08" db="EMBL/GenBank/DDBJ databases">
        <authorList>
            <person name="Stapleton M."/>
            <person name="Brokstein P."/>
            <person name="Hong L."/>
            <person name="Agbayani A."/>
            <person name="Carlson J.W."/>
            <person name="Champe M."/>
            <person name="Chavez C."/>
            <person name="Dorsett V."/>
            <person name="Dresnek D."/>
            <person name="Farfan D."/>
            <person name="Frise E."/>
            <person name="George R.A."/>
            <person name="Gonzalez M."/>
            <person name="Guarin H."/>
            <person name="Kronmiller B."/>
            <person name="Li P.W."/>
            <person name="Liao G."/>
            <person name="Miranda A."/>
            <person name="Mungall C.J."/>
            <person name="Nunoo J."/>
            <person name="Pacleb J.M."/>
            <person name="Paragas V."/>
            <person name="Park S."/>
            <person name="Patel S."/>
            <person name="Phouanenavong S."/>
            <person name="Wan K.H."/>
            <person name="Yu C."/>
            <person name="Lewis S.E."/>
            <person name="Rubin G.M."/>
            <person name="Celniker S.E."/>
        </authorList>
    </citation>
    <scope>NUCLEOTIDE SEQUENCE [LARGE SCALE MRNA] (ISOFORMS A AND SYB-B)</scope>
    <source>
        <strain>Berkeley</strain>
        <tissue>Embryo</tissue>
    </source>
</reference>
<reference key="6">
    <citation type="journal article" date="1993" name="J. Neurosci.">
        <title>Identification and characterization of Drosophila genes for synaptic vesicle proteins.</title>
        <authorList>
            <person name="DiAntonio A."/>
            <person name="Burgess R.W."/>
            <person name="Chin A.C."/>
            <person name="Deitcher D.L."/>
            <person name="Scheller R.H."/>
            <person name="Schwarz T.L."/>
        </authorList>
    </citation>
    <scope>TISSUE SPECIFICITY</scope>
    <scope>DEVELOPMENTAL STAGE</scope>
</reference>
<reference key="7">
    <citation type="journal article" date="2002" name="Proc. Natl. Acad. Sci. U.S.A.">
        <title>Members of the synaptobrevin/vesicle-associated membrane protein (VAMP) family in Drosophila are functionally interchangeable in vivo for neurotransmitter release and cell viability.</title>
        <authorList>
            <person name="Bhattacharya S."/>
            <person name="Stewart B.A."/>
            <person name="Niemeyer B.A."/>
            <person name="Burgess R.W."/>
            <person name="McCabe B.D."/>
            <person name="Lin P."/>
            <person name="Boulianne G."/>
            <person name="O'Kane C.J."/>
            <person name="Schwarz T.L."/>
        </authorList>
    </citation>
    <scope>FUNCTION</scope>
    <scope>SUBUNIT</scope>
    <scope>DISRUPTION PHENOTYPE</scope>
</reference>
<reference key="8">
    <citation type="journal article" date="2013" name="EMBO J.">
        <title>Goliath family E3 ligases regulate the recycling endosome pathway via VAMP3 ubiquitylation.</title>
        <authorList>
            <person name="Yamazaki Y."/>
            <person name="Schoenherr C."/>
            <person name="Varshney G.K."/>
            <person name="Dogru M."/>
            <person name="Hallberg B."/>
            <person name="Palmer R.H."/>
        </authorList>
    </citation>
    <scope>UBIQUITINATION</scope>
</reference>
<reference key="9">
    <citation type="journal article" date="2016" name="Nat. Cell Biol.">
        <title>Godzilla-dependent transcytosis promotes Wingless signalling in Drosophila wing imaginal discs.</title>
        <authorList>
            <person name="Yamazaki Y."/>
            <person name="Palmer L."/>
            <person name="Alexandre C."/>
            <person name="Kakugawa S."/>
            <person name="Beckett K."/>
            <person name="Gaugue I."/>
            <person name="Palmer R.H."/>
            <person name="Vincent J.P."/>
        </authorList>
    </citation>
    <scope>UBIQUITINATION</scope>
</reference>
<reference key="10">
    <citation type="journal article" date="2016" name="Nat. Cell Biol.">
        <title>Staccato/Unc-13-4 controls secretory lysosome-mediated lumen fusion during epithelial tube anastomosis.</title>
        <authorList>
            <person name="Caviglia S."/>
            <person name="Brankatschk M."/>
            <person name="Fischer E.J."/>
            <person name="Eaton S."/>
            <person name="Luschnig S."/>
        </authorList>
    </citation>
    <scope>SUBCELLULAR LOCATION</scope>
</reference>
<comment type="function">
    <text evidence="6">Involved in the targeting and/or fusion of transport vesicles to their target membrane.</text>
</comment>
<comment type="subunit">
    <text evidence="6">Part of the SNARE core complex containing Snap25 and syntaxin.</text>
</comment>
<comment type="interaction">
    <interactant intactId="EBI-497912">
        <id>P18489</id>
    </interactant>
    <interactant intactId="EBI-135062">
        <id>Q24547</id>
        <label>Syx1A</label>
    </interactant>
    <organismsDiffer>false</organismsDiffer>
    <experiments>3</experiments>
</comment>
<comment type="subcellular location">
    <subcellularLocation>
        <location evidence="2">Cytoplasmic vesicle</location>
        <location evidence="2">Secretory vesicle</location>
        <location evidence="2">Synaptic vesicle membrane</location>
        <topology evidence="3">Single-pass type IV membrane protein</topology>
    </subcellularLocation>
    <subcellularLocation>
        <location evidence="9">Cell membrane</location>
        <topology evidence="3">Single-pass type IV membrane protein</topology>
    </subcellularLocation>
    <text evidence="1 9">Neuronal synaptic vesicles (By similarity). In embryos, expressed in the plasma membrane of tracheal cells (PubMed:27323327).</text>
</comment>
<comment type="alternative products">
    <event type="alternative splicing"/>
    <isoform>
        <id>P18489-1</id>
        <name>Syb-A</name>
        <name>C</name>
        <sequence type="displayed"/>
    </isoform>
    <isoform>
        <id>P18489-2</id>
        <name>Syb-B</name>
        <name>B</name>
        <sequence type="described" ref="VSP_006327 VSP_006328"/>
    </isoform>
    <isoform>
        <id>P18489-3</id>
        <name>A</name>
        <sequence type="described" ref="VSP_016074"/>
    </isoform>
    <isoform>
        <id>P18489-4</id>
        <name>D</name>
        <sequence type="described" ref="VSP_016074 VSP_006327 VSP_006328"/>
    </isoform>
    <text>The ratio of isoform Syb-A to isoform Syb-B is highly regulated during development.</text>
</comment>
<comment type="tissue specificity">
    <text evidence="10 11">Not nervous system-specific; abundant in cells of the gut and Malpighian tubules.</text>
</comment>
<comment type="PTM">
    <text evidence="7 8">Ubiquitinated by gzl, regulating endocytic trafficking (PubMed:23353890). In wing imaginal disks, ubiquitination by gzl promotes transcytosis of wingless (wg) to the basolateral surface (PubMed:26974662).</text>
</comment>
<comment type="disruption phenotype">
    <text evidence="6">Cell lethality.</text>
</comment>
<comment type="similarity">
    <text evidence="14">Belongs to the synaptobrevin family.</text>
</comment>
<accession>P18489</accession>
<accession>B7YZD5</accession>
<accession>B7YZD6</accession>
<accession>Q3HKB4</accession>
<accession>Q8MKX1</accession>
<accession>Q9V5I6</accession>
<organism>
    <name type="scientific">Drosophila melanogaster</name>
    <name type="common">Fruit fly</name>
    <dbReference type="NCBI Taxonomy" id="7227"/>
    <lineage>
        <taxon>Eukaryota</taxon>
        <taxon>Metazoa</taxon>
        <taxon>Ecdysozoa</taxon>
        <taxon>Arthropoda</taxon>
        <taxon>Hexapoda</taxon>
        <taxon>Insecta</taxon>
        <taxon>Pterygota</taxon>
        <taxon>Neoptera</taxon>
        <taxon>Endopterygota</taxon>
        <taxon>Diptera</taxon>
        <taxon>Brachycera</taxon>
        <taxon>Muscomorpha</taxon>
        <taxon>Ephydroidea</taxon>
        <taxon>Drosophilidae</taxon>
        <taxon>Drosophila</taxon>
        <taxon>Sophophora</taxon>
    </lineage>
</organism>